<dbReference type="EC" id="2.1.2.1" evidence="1"/>
<dbReference type="EMBL" id="CP000089">
    <property type="protein sequence ID" value="AAZ45360.1"/>
    <property type="molecule type" value="Genomic_DNA"/>
</dbReference>
<dbReference type="SMR" id="Q47IH1"/>
<dbReference type="STRING" id="159087.Daro_0603"/>
<dbReference type="KEGG" id="dar:Daro_0603"/>
<dbReference type="eggNOG" id="COG0112">
    <property type="taxonomic scope" value="Bacteria"/>
</dbReference>
<dbReference type="HOGENOM" id="CLU_022477_2_1_4"/>
<dbReference type="OrthoDB" id="9803846at2"/>
<dbReference type="UniPathway" id="UPA00193"/>
<dbReference type="UniPathway" id="UPA00288">
    <property type="reaction ID" value="UER01023"/>
</dbReference>
<dbReference type="GO" id="GO:0005829">
    <property type="term" value="C:cytosol"/>
    <property type="evidence" value="ECO:0007669"/>
    <property type="project" value="TreeGrafter"/>
</dbReference>
<dbReference type="GO" id="GO:0004372">
    <property type="term" value="F:glycine hydroxymethyltransferase activity"/>
    <property type="evidence" value="ECO:0007669"/>
    <property type="project" value="UniProtKB-UniRule"/>
</dbReference>
<dbReference type="GO" id="GO:0030170">
    <property type="term" value="F:pyridoxal phosphate binding"/>
    <property type="evidence" value="ECO:0007669"/>
    <property type="project" value="UniProtKB-UniRule"/>
</dbReference>
<dbReference type="GO" id="GO:0019264">
    <property type="term" value="P:glycine biosynthetic process from serine"/>
    <property type="evidence" value="ECO:0007669"/>
    <property type="project" value="UniProtKB-UniRule"/>
</dbReference>
<dbReference type="GO" id="GO:0035999">
    <property type="term" value="P:tetrahydrofolate interconversion"/>
    <property type="evidence" value="ECO:0007669"/>
    <property type="project" value="UniProtKB-UniRule"/>
</dbReference>
<dbReference type="CDD" id="cd00378">
    <property type="entry name" value="SHMT"/>
    <property type="match status" value="1"/>
</dbReference>
<dbReference type="FunFam" id="3.40.640.10:FF:000001">
    <property type="entry name" value="Serine hydroxymethyltransferase"/>
    <property type="match status" value="1"/>
</dbReference>
<dbReference type="FunFam" id="3.90.1150.10:FF:000003">
    <property type="entry name" value="Serine hydroxymethyltransferase"/>
    <property type="match status" value="1"/>
</dbReference>
<dbReference type="Gene3D" id="3.90.1150.10">
    <property type="entry name" value="Aspartate Aminotransferase, domain 1"/>
    <property type="match status" value="1"/>
</dbReference>
<dbReference type="Gene3D" id="3.40.640.10">
    <property type="entry name" value="Type I PLP-dependent aspartate aminotransferase-like (Major domain)"/>
    <property type="match status" value="1"/>
</dbReference>
<dbReference type="HAMAP" id="MF_00051">
    <property type="entry name" value="SHMT"/>
    <property type="match status" value="1"/>
</dbReference>
<dbReference type="InterPro" id="IPR015424">
    <property type="entry name" value="PyrdxlP-dep_Trfase"/>
</dbReference>
<dbReference type="InterPro" id="IPR015421">
    <property type="entry name" value="PyrdxlP-dep_Trfase_major"/>
</dbReference>
<dbReference type="InterPro" id="IPR015422">
    <property type="entry name" value="PyrdxlP-dep_Trfase_small"/>
</dbReference>
<dbReference type="InterPro" id="IPR001085">
    <property type="entry name" value="Ser_HO-MeTrfase"/>
</dbReference>
<dbReference type="InterPro" id="IPR049943">
    <property type="entry name" value="Ser_HO-MeTrfase-like"/>
</dbReference>
<dbReference type="InterPro" id="IPR019798">
    <property type="entry name" value="Ser_HO-MeTrfase_PLP_BS"/>
</dbReference>
<dbReference type="InterPro" id="IPR039429">
    <property type="entry name" value="SHMT-like_dom"/>
</dbReference>
<dbReference type="NCBIfam" id="NF000586">
    <property type="entry name" value="PRK00011.1"/>
    <property type="match status" value="1"/>
</dbReference>
<dbReference type="PANTHER" id="PTHR11680">
    <property type="entry name" value="SERINE HYDROXYMETHYLTRANSFERASE"/>
    <property type="match status" value="1"/>
</dbReference>
<dbReference type="PANTHER" id="PTHR11680:SF50">
    <property type="entry name" value="SERINE HYDROXYMETHYLTRANSFERASE"/>
    <property type="match status" value="1"/>
</dbReference>
<dbReference type="Pfam" id="PF00464">
    <property type="entry name" value="SHMT"/>
    <property type="match status" value="1"/>
</dbReference>
<dbReference type="PIRSF" id="PIRSF000412">
    <property type="entry name" value="SHMT"/>
    <property type="match status" value="1"/>
</dbReference>
<dbReference type="SUPFAM" id="SSF53383">
    <property type="entry name" value="PLP-dependent transferases"/>
    <property type="match status" value="1"/>
</dbReference>
<dbReference type="PROSITE" id="PS00096">
    <property type="entry name" value="SHMT"/>
    <property type="match status" value="1"/>
</dbReference>
<sequence>MFSAKDTLAKVDPELWQAIQAEVQRQEDHIELIASENYVSKAVMEAQGSQLTNKYAEGYPGKRYYGGCEYVDVAEQIAIDRLKKLFGAEAANVQPNSGSQANQAVLMAFAKPGDTIMGMSLAEGGHLTHGMALNMSGKWFNVVSYGLNEKEEIDYDKMEALAREHKPKIIVAGASAYALRIDWERFAKIAKEVGAIFWVDMAHYAGLIAAGFYPNPVPFADVVTSTTHKTLRGPRGGVILMKAEHEKALNSAIFPGLQGGPLEHVIAAKAVAFKEAATPEFKNYQEQVINNARVMARVLGEERGLRIVSGRTESHVFLLDLRAKNITGKDAEAALGRAHITVNKNGIPNDPQKPFVTSGIRIGSPAMTTRGFTEIEAEQIAHLVADVLEAPSDEAVAATVREKVSALCKKFPVYGA</sequence>
<name>GLYA_DECAR</name>
<keyword id="KW-0028">Amino-acid biosynthesis</keyword>
<keyword id="KW-0963">Cytoplasm</keyword>
<keyword id="KW-0554">One-carbon metabolism</keyword>
<keyword id="KW-0663">Pyridoxal phosphate</keyword>
<keyword id="KW-0808">Transferase</keyword>
<gene>
    <name evidence="1" type="primary">glyA</name>
    <name type="ordered locus">Daro_0603</name>
</gene>
<protein>
    <recommendedName>
        <fullName evidence="1">Serine hydroxymethyltransferase</fullName>
        <shortName evidence="1">SHMT</shortName>
        <shortName evidence="1">Serine methylase</shortName>
        <ecNumber evidence="1">2.1.2.1</ecNumber>
    </recommendedName>
</protein>
<accession>Q47IH1</accession>
<organism>
    <name type="scientific">Dechloromonas aromatica (strain RCB)</name>
    <dbReference type="NCBI Taxonomy" id="159087"/>
    <lineage>
        <taxon>Bacteria</taxon>
        <taxon>Pseudomonadati</taxon>
        <taxon>Pseudomonadota</taxon>
        <taxon>Betaproteobacteria</taxon>
        <taxon>Rhodocyclales</taxon>
        <taxon>Azonexaceae</taxon>
        <taxon>Dechloromonas</taxon>
    </lineage>
</organism>
<proteinExistence type="inferred from homology"/>
<feature type="chain" id="PRO_0000234972" description="Serine hydroxymethyltransferase">
    <location>
        <begin position="1"/>
        <end position="416"/>
    </location>
</feature>
<feature type="binding site" evidence="1">
    <location>
        <position position="121"/>
    </location>
    <ligand>
        <name>(6S)-5,6,7,8-tetrahydrofolate</name>
        <dbReference type="ChEBI" id="CHEBI:57453"/>
    </ligand>
</feature>
<feature type="binding site" evidence="1">
    <location>
        <begin position="125"/>
        <end position="127"/>
    </location>
    <ligand>
        <name>(6S)-5,6,7,8-tetrahydrofolate</name>
        <dbReference type="ChEBI" id="CHEBI:57453"/>
    </ligand>
</feature>
<feature type="site" description="Plays an important role in substrate specificity" evidence="1">
    <location>
        <position position="228"/>
    </location>
</feature>
<feature type="modified residue" description="N6-(pyridoxal phosphate)lysine" evidence="1">
    <location>
        <position position="229"/>
    </location>
</feature>
<evidence type="ECO:0000255" key="1">
    <source>
        <dbReference type="HAMAP-Rule" id="MF_00051"/>
    </source>
</evidence>
<comment type="function">
    <text evidence="1">Catalyzes the reversible interconversion of serine and glycine with tetrahydrofolate (THF) serving as the one-carbon carrier. This reaction serves as the major source of one-carbon groups required for the biosynthesis of purines, thymidylate, methionine, and other important biomolecules. Also exhibits THF-independent aldolase activity toward beta-hydroxyamino acids, producing glycine and aldehydes, via a retro-aldol mechanism.</text>
</comment>
<comment type="catalytic activity">
    <reaction evidence="1">
        <text>(6R)-5,10-methylene-5,6,7,8-tetrahydrofolate + glycine + H2O = (6S)-5,6,7,8-tetrahydrofolate + L-serine</text>
        <dbReference type="Rhea" id="RHEA:15481"/>
        <dbReference type="ChEBI" id="CHEBI:15377"/>
        <dbReference type="ChEBI" id="CHEBI:15636"/>
        <dbReference type="ChEBI" id="CHEBI:33384"/>
        <dbReference type="ChEBI" id="CHEBI:57305"/>
        <dbReference type="ChEBI" id="CHEBI:57453"/>
        <dbReference type="EC" id="2.1.2.1"/>
    </reaction>
</comment>
<comment type="cofactor">
    <cofactor evidence="1">
        <name>pyridoxal 5'-phosphate</name>
        <dbReference type="ChEBI" id="CHEBI:597326"/>
    </cofactor>
</comment>
<comment type="pathway">
    <text evidence="1">One-carbon metabolism; tetrahydrofolate interconversion.</text>
</comment>
<comment type="pathway">
    <text evidence="1">Amino-acid biosynthesis; glycine biosynthesis; glycine from L-serine: step 1/1.</text>
</comment>
<comment type="subunit">
    <text evidence="1">Homodimer.</text>
</comment>
<comment type="subcellular location">
    <subcellularLocation>
        <location evidence="1">Cytoplasm</location>
    </subcellularLocation>
</comment>
<comment type="similarity">
    <text evidence="1">Belongs to the SHMT family.</text>
</comment>
<reference key="1">
    <citation type="journal article" date="2009" name="BMC Genomics">
        <title>Metabolic analysis of the soil microbe Dechloromonas aromatica str. RCB: indications of a surprisingly complex life-style and cryptic anaerobic pathways for aromatic degradation.</title>
        <authorList>
            <person name="Salinero K.K."/>
            <person name="Keller K."/>
            <person name="Feil W.S."/>
            <person name="Feil H."/>
            <person name="Trong S."/>
            <person name="Di Bartolo G."/>
            <person name="Lapidus A."/>
        </authorList>
    </citation>
    <scope>NUCLEOTIDE SEQUENCE [LARGE SCALE GENOMIC DNA]</scope>
    <source>
        <strain>RCB</strain>
    </source>
</reference>